<accession>P02104</accession>
<accession>Q62480</accession>
<accession>Q64358</accession>
<protein>
    <recommendedName>
        <fullName>Hemoglobin subunit epsilon-Y2</fullName>
    </recommendedName>
    <alternativeName>
        <fullName>Epsilon-Y2-globin</fullName>
    </alternativeName>
    <alternativeName>
        <fullName>Hemoglobin epsilon-Y2 chain</fullName>
    </alternativeName>
</protein>
<proteinExistence type="evidence at protein level"/>
<comment type="function">
    <text>Hemoglobin epsilon chain is a beta-type chain found in early embryos.</text>
</comment>
<comment type="tissue specificity">
    <text>High expression in yolk sac blood islands, fetal liver, and embryonic erythrocytes. Very low levels in adult liver and spleen.</text>
</comment>
<comment type="similarity">
    <text evidence="2">Belongs to the globin family.</text>
</comment>
<name>HBE_MOUSE</name>
<feature type="initiator methionine" description="Removed" evidence="3">
    <location>
        <position position="1"/>
    </location>
</feature>
<feature type="chain" id="PRO_0000053219" description="Hemoglobin subunit epsilon-Y2">
    <location>
        <begin position="2"/>
        <end position="147"/>
    </location>
</feature>
<feature type="domain" description="Globin" evidence="2">
    <location>
        <begin position="3"/>
        <end position="147"/>
    </location>
</feature>
<feature type="binding site" description="distal binding residue" evidence="2">
    <location>
        <position position="64"/>
    </location>
    <ligand>
        <name>heme b</name>
        <dbReference type="ChEBI" id="CHEBI:60344"/>
    </ligand>
    <ligandPart>
        <name>Fe</name>
        <dbReference type="ChEBI" id="CHEBI:18248"/>
    </ligandPart>
</feature>
<feature type="binding site" description="proximal binding residue" evidence="2">
    <location>
        <position position="93"/>
    </location>
    <ligand>
        <name>heme b</name>
        <dbReference type="ChEBI" id="CHEBI:60344"/>
    </ligand>
    <ligandPart>
        <name>Fe</name>
        <dbReference type="ChEBI" id="CHEBI:18248"/>
    </ligandPart>
</feature>
<feature type="modified residue" description="Phosphoserine" evidence="1">
    <location>
        <position position="51"/>
    </location>
</feature>
<feature type="sequence variant">
    <original>EE</original>
    <variation>GK</variation>
    <location>
        <begin position="22"/>
        <end position="23"/>
    </location>
</feature>
<feature type="sequence variant">
    <original>Q</original>
    <variation>H</variation>
    <location>
        <position position="40"/>
    </location>
</feature>
<feature type="sequence variant">
    <location>
        <position position="94"/>
    </location>
</feature>
<feature type="sequence variant">
    <location>
        <position position="124"/>
    </location>
</feature>
<organism>
    <name type="scientific">Mus musculus</name>
    <name type="common">Mouse</name>
    <dbReference type="NCBI Taxonomy" id="10090"/>
    <lineage>
        <taxon>Eukaryota</taxon>
        <taxon>Metazoa</taxon>
        <taxon>Chordata</taxon>
        <taxon>Craniata</taxon>
        <taxon>Vertebrata</taxon>
        <taxon>Euteleostomi</taxon>
        <taxon>Mammalia</taxon>
        <taxon>Eutheria</taxon>
        <taxon>Euarchontoglires</taxon>
        <taxon>Glires</taxon>
        <taxon>Rodentia</taxon>
        <taxon>Myomorpha</taxon>
        <taxon>Muroidea</taxon>
        <taxon>Muridae</taxon>
        <taxon>Murinae</taxon>
        <taxon>Mus</taxon>
        <taxon>Mus</taxon>
    </lineage>
</organism>
<keyword id="KW-0903">Direct protein sequencing</keyword>
<keyword id="KW-0349">Heme</keyword>
<keyword id="KW-0408">Iron</keyword>
<keyword id="KW-0479">Metal-binding</keyword>
<keyword id="KW-0561">Oxygen transport</keyword>
<keyword id="KW-0597">Phosphoprotein</keyword>
<keyword id="KW-1185">Reference proteome</keyword>
<keyword id="KW-0813">Transport</keyword>
<dbReference type="EMBL" id="X14061">
    <property type="protein sequence ID" value="CAA32219.1"/>
    <property type="molecule type" value="Genomic_DNA"/>
</dbReference>
<dbReference type="EMBL" id="V00726">
    <property type="protein sequence ID" value="CAA24104.1"/>
    <property type="molecule type" value="Genomic_DNA"/>
</dbReference>
<dbReference type="EMBL" id="M95676">
    <property type="protein sequence ID" value="AAA40575.1"/>
    <property type="molecule type" value="Genomic_DNA"/>
</dbReference>
<dbReference type="EMBL" id="M26897">
    <property type="protein sequence ID" value="AAA37701.1"/>
    <property type="molecule type" value="mRNA"/>
</dbReference>
<dbReference type="EMBL" id="V00857">
    <property type="protein sequence ID" value="CAA24225.1"/>
    <property type="molecule type" value="mRNA"/>
</dbReference>
<dbReference type="EMBL" id="V00742">
    <property type="protein sequence ID" value="CAA24117.1"/>
    <property type="molecule type" value="Genomic_DNA"/>
</dbReference>
<dbReference type="CCDS" id="CCDS21593.1"/>
<dbReference type="PIR" id="A92342">
    <property type="entry name" value="HEMSY2"/>
</dbReference>
<dbReference type="RefSeq" id="NP_032247.1">
    <property type="nucleotide sequence ID" value="NM_008221.4"/>
</dbReference>
<dbReference type="SMR" id="P02104"/>
<dbReference type="BioGRID" id="200224">
    <property type="interactions" value="2"/>
</dbReference>
<dbReference type="ComplexPortal" id="CPX-2939">
    <property type="entry name" value="Embryonic hemoglobin complex"/>
</dbReference>
<dbReference type="FunCoup" id="P02104">
    <property type="interactions" value="16"/>
</dbReference>
<dbReference type="STRING" id="10090.ENSMUSP00000033229"/>
<dbReference type="GlyGen" id="P02104">
    <property type="glycosylation" value="1 site, 1 O-linked glycan (1 site)"/>
</dbReference>
<dbReference type="iPTMnet" id="P02104"/>
<dbReference type="PhosphoSitePlus" id="P02104"/>
<dbReference type="jPOST" id="P02104"/>
<dbReference type="PaxDb" id="10090-ENSMUSP00000033229"/>
<dbReference type="PeptideAtlas" id="P02104"/>
<dbReference type="ProteomicsDB" id="271493"/>
<dbReference type="DNASU" id="15135"/>
<dbReference type="GeneID" id="15135"/>
<dbReference type="KEGG" id="mmu:15135"/>
<dbReference type="AGR" id="MGI:96027"/>
<dbReference type="CTD" id="15135"/>
<dbReference type="MGI" id="MGI:96027">
    <property type="gene designation" value="Hbb-y"/>
</dbReference>
<dbReference type="eggNOG" id="KOG3378">
    <property type="taxonomic scope" value="Eukaryota"/>
</dbReference>
<dbReference type="InParanoid" id="P02104"/>
<dbReference type="OrthoDB" id="9886081at2759"/>
<dbReference type="PhylomeDB" id="P02104"/>
<dbReference type="BioGRID-ORCS" id="15135">
    <property type="hits" value="0 hits in 78 CRISPR screens"/>
</dbReference>
<dbReference type="ChiTaRS" id="Hbb-y">
    <property type="organism name" value="mouse"/>
</dbReference>
<dbReference type="PRO" id="PR:P02104"/>
<dbReference type="Proteomes" id="UP000000589">
    <property type="component" value="Unplaced"/>
</dbReference>
<dbReference type="RNAct" id="P02104">
    <property type="molecule type" value="protein"/>
</dbReference>
<dbReference type="GO" id="GO:0005833">
    <property type="term" value="C:hemoglobin complex"/>
    <property type="evidence" value="ECO:0000303"/>
    <property type="project" value="ComplexPortal"/>
</dbReference>
<dbReference type="GO" id="GO:0020037">
    <property type="term" value="F:heme binding"/>
    <property type="evidence" value="ECO:0007669"/>
    <property type="project" value="InterPro"/>
</dbReference>
<dbReference type="GO" id="GO:0046872">
    <property type="term" value="F:metal ion binding"/>
    <property type="evidence" value="ECO:0007669"/>
    <property type="project" value="UniProtKB-KW"/>
</dbReference>
<dbReference type="GO" id="GO:0019825">
    <property type="term" value="F:oxygen binding"/>
    <property type="evidence" value="ECO:0007669"/>
    <property type="project" value="InterPro"/>
</dbReference>
<dbReference type="GO" id="GO:0005344">
    <property type="term" value="F:oxygen carrier activity"/>
    <property type="evidence" value="ECO:0007669"/>
    <property type="project" value="UniProtKB-KW"/>
</dbReference>
<dbReference type="GO" id="GO:0015670">
    <property type="term" value="P:carbon dioxide transport"/>
    <property type="evidence" value="ECO:0000303"/>
    <property type="project" value="ComplexPortal"/>
</dbReference>
<dbReference type="GO" id="GO:0000122">
    <property type="term" value="P:negative regulation of transcription by RNA polymerase II"/>
    <property type="evidence" value="ECO:0000315"/>
    <property type="project" value="MGI"/>
</dbReference>
<dbReference type="GO" id="GO:0015671">
    <property type="term" value="P:oxygen transport"/>
    <property type="evidence" value="ECO:0000303"/>
    <property type="project" value="ComplexPortal"/>
</dbReference>
<dbReference type="CDD" id="cd08925">
    <property type="entry name" value="Hb-beta-like"/>
    <property type="match status" value="1"/>
</dbReference>
<dbReference type="FunFam" id="1.10.490.10:FF:000001">
    <property type="entry name" value="Hemoglobin subunit beta"/>
    <property type="match status" value="1"/>
</dbReference>
<dbReference type="Gene3D" id="1.10.490.10">
    <property type="entry name" value="Globins"/>
    <property type="match status" value="1"/>
</dbReference>
<dbReference type="InterPro" id="IPR000971">
    <property type="entry name" value="Globin"/>
</dbReference>
<dbReference type="InterPro" id="IPR009050">
    <property type="entry name" value="Globin-like_sf"/>
</dbReference>
<dbReference type="InterPro" id="IPR012292">
    <property type="entry name" value="Globin/Proto"/>
</dbReference>
<dbReference type="InterPro" id="IPR002337">
    <property type="entry name" value="Hemoglobin_b"/>
</dbReference>
<dbReference type="InterPro" id="IPR050056">
    <property type="entry name" value="Hemoglobin_oxygen_transport"/>
</dbReference>
<dbReference type="PANTHER" id="PTHR11442">
    <property type="entry name" value="HEMOGLOBIN FAMILY MEMBER"/>
    <property type="match status" value="1"/>
</dbReference>
<dbReference type="PANTHER" id="PTHR11442:SF84">
    <property type="entry name" value="HEMOGLOBIN SUBUNIT EPSILON-Y2"/>
    <property type="match status" value="1"/>
</dbReference>
<dbReference type="Pfam" id="PF00042">
    <property type="entry name" value="Globin"/>
    <property type="match status" value="1"/>
</dbReference>
<dbReference type="PRINTS" id="PR00814">
    <property type="entry name" value="BETAHAEM"/>
</dbReference>
<dbReference type="SUPFAM" id="SSF46458">
    <property type="entry name" value="Globin-like"/>
    <property type="match status" value="1"/>
</dbReference>
<dbReference type="PROSITE" id="PS01033">
    <property type="entry name" value="GLOBIN"/>
    <property type="match status" value="1"/>
</dbReference>
<sequence>MVNFTAEEKTLINGLWSKVNVEEVGGEALGRLLVVYPWTQRFFDSFGNLSSASAIMGNPRVKAHGKKVLTAFGESIKNLDNLKSALAKLSELHCDKLHVDPENFKLLGNVLVIVLASHFGNEFTAEMQAAWQKLVAGVATALSHKYH</sequence>
<reference key="1">
    <citation type="journal article" date="1989" name="J. Mol. Biol.">
        <title>Nucleotide sequence of the BALB/c mouse beta-globin complex.</title>
        <authorList>
            <person name="Shehee W.R."/>
            <person name="Loeb D.D."/>
            <person name="Adey N.B."/>
            <person name="Burton F.H."/>
            <person name="Casavant N.C."/>
            <person name="Cole P."/>
            <person name="Davies C.J."/>
            <person name="McGraw R.A."/>
            <person name="Schichman S.A."/>
            <person name="Severynse D.M."/>
            <person name="Voliva C.F."/>
            <person name="Weyter F.W."/>
            <person name="Wisely G.B."/>
            <person name="Edgell M.H."/>
            <person name="Hutchison C.A. III"/>
        </authorList>
    </citation>
    <scope>NUCLEOTIDE SEQUENCE</scope>
    <source>
        <strain>BALB/cJ</strain>
    </source>
</reference>
<reference key="2">
    <citation type="journal article" date="1982" name="J. Biol. Chem.">
        <title>The sequence of a mouse embryonic beta-globin gene. Evolution of the gene and its signal region.</title>
        <authorList>
            <person name="Hansen J.N."/>
            <person name="Konkel D.A."/>
            <person name="Leder P."/>
        </authorList>
    </citation>
    <scope>NUCLEOTIDE SEQUENCE</scope>
    <source>
        <strain>BALB/cJ</strain>
    </source>
</reference>
<reference key="3">
    <citation type="submission" date="1992-06" db="EMBL/GenBank/DDBJ databases">
        <authorList>
            <person name="Josifovska O."/>
            <person name="Gilman J.G."/>
        </authorList>
    </citation>
    <scope>NUCLEOTIDE SEQUENCE</scope>
</reference>
<reference key="4">
    <citation type="journal article" date="1987" name="Development">
        <title>A molecular analysis of mouse development from 8 to 10 days post coitum detects changes only in embryonic globin expression.</title>
        <authorList>
            <person name="Wilkinson D.G."/>
            <person name="Bailes J.A."/>
            <person name="Champion J.E."/>
            <person name="McMahon A.P."/>
        </authorList>
    </citation>
    <scope>NUCLEOTIDE SEQUENCE</scope>
    <source>
        <strain>CBA/CaJ</strain>
        <tissue>Embryo</tissue>
    </source>
</reference>
<reference key="5">
    <citation type="journal article" date="1976" name="Biochem. J.">
        <title>Mouse haemoglobin beta chains. Sequence data on embryonic y chain and genetic linkage of the Y-chain locus to the adult beta-chain locus Hbb.</title>
        <authorList>
            <person name="Gilman J.G."/>
        </authorList>
    </citation>
    <scope>PROTEIN SEQUENCE OF 2-40</scope>
</reference>
<reference key="6">
    <citation type="journal article" date="1981" name="Gene">
        <title>The nucleotide sequence of the mouse embryonic beta-like y-globin messenger RNA as determined from cloned cDNA.</title>
        <authorList>
            <person name="Vanin E.F."/>
            <person name="Farace M.G."/>
            <person name="Gambari R."/>
            <person name="Fantoni A."/>
        </authorList>
    </citation>
    <scope>NUCLEOTIDE SEQUENCE OF 22-147</scope>
</reference>
<reference key="7">
    <citation type="journal article" date="1980" name="Cell">
        <title>DNA sequence organization of the beta-globin complex in the BALB/c mouse.</title>
        <authorList>
            <person name="Jahn C.L."/>
            <person name="Hutchison C.A. III"/>
            <person name="Phillips S.J."/>
            <person name="Weaver S."/>
            <person name="Haigwood N.L."/>
            <person name="Voliva C.F."/>
            <person name="Edgell M.H."/>
        </authorList>
    </citation>
    <scope>NUCLEOTIDE SEQUENCE OF 32-105</scope>
    <source>
        <strain>BALB/cJ</strain>
        <tissue>Embryo</tissue>
    </source>
</reference>
<evidence type="ECO:0000250" key="1">
    <source>
        <dbReference type="UniProtKB" id="P02100"/>
    </source>
</evidence>
<evidence type="ECO:0000255" key="2">
    <source>
        <dbReference type="PROSITE-ProRule" id="PRU00238"/>
    </source>
</evidence>
<evidence type="ECO:0000269" key="3">
    <source>
    </source>
</evidence>
<gene>
    <name type="primary">Hbb-y</name>
</gene>